<organism>
    <name type="scientific">Protochlamydia amoebophila (strain UWE25)</name>
    <dbReference type="NCBI Taxonomy" id="264201"/>
    <lineage>
        <taxon>Bacteria</taxon>
        <taxon>Pseudomonadati</taxon>
        <taxon>Chlamydiota</taxon>
        <taxon>Chlamydiia</taxon>
        <taxon>Parachlamydiales</taxon>
        <taxon>Parachlamydiaceae</taxon>
        <taxon>Candidatus Protochlamydia</taxon>
    </lineage>
</organism>
<reference key="1">
    <citation type="journal article" date="2004" name="Science">
        <title>Illuminating the evolutionary history of chlamydiae.</title>
        <authorList>
            <person name="Horn M."/>
            <person name="Collingro A."/>
            <person name="Schmitz-Esser S."/>
            <person name="Beier C.L."/>
            <person name="Purkhold U."/>
            <person name="Fartmann B."/>
            <person name="Brandt P."/>
            <person name="Nyakatura G.J."/>
            <person name="Droege M."/>
            <person name="Frishman D."/>
            <person name="Rattei T."/>
            <person name="Mewes H.-W."/>
            <person name="Wagner M."/>
        </authorList>
    </citation>
    <scope>NUCLEOTIDE SEQUENCE [LARGE SCALE GENOMIC DNA]</scope>
    <source>
        <strain>UWE25</strain>
    </source>
</reference>
<proteinExistence type="inferred from homology"/>
<keyword id="KW-1185">Reference proteome</keyword>
<keyword id="KW-0687">Ribonucleoprotein</keyword>
<keyword id="KW-0689">Ribosomal protein</keyword>
<keyword id="KW-0694">RNA-binding</keyword>
<keyword id="KW-0699">rRNA-binding</keyword>
<dbReference type="EMBL" id="BX908798">
    <property type="protein sequence ID" value="CAF22856.1"/>
    <property type="molecule type" value="Genomic_DNA"/>
</dbReference>
<dbReference type="RefSeq" id="WP_011174682.1">
    <property type="nucleotide sequence ID" value="NC_005861.2"/>
</dbReference>
<dbReference type="SMR" id="Q6MEZ3"/>
<dbReference type="STRING" id="264201.pc0132"/>
<dbReference type="KEGG" id="pcu:PC_RS00640"/>
<dbReference type="eggNOG" id="COG0268">
    <property type="taxonomic scope" value="Bacteria"/>
</dbReference>
<dbReference type="HOGENOM" id="CLU_160655_2_0_0"/>
<dbReference type="OrthoDB" id="21589at2"/>
<dbReference type="Proteomes" id="UP000000529">
    <property type="component" value="Chromosome"/>
</dbReference>
<dbReference type="GO" id="GO:0005829">
    <property type="term" value="C:cytosol"/>
    <property type="evidence" value="ECO:0007669"/>
    <property type="project" value="TreeGrafter"/>
</dbReference>
<dbReference type="GO" id="GO:0015935">
    <property type="term" value="C:small ribosomal subunit"/>
    <property type="evidence" value="ECO:0007669"/>
    <property type="project" value="TreeGrafter"/>
</dbReference>
<dbReference type="GO" id="GO:0070181">
    <property type="term" value="F:small ribosomal subunit rRNA binding"/>
    <property type="evidence" value="ECO:0007669"/>
    <property type="project" value="TreeGrafter"/>
</dbReference>
<dbReference type="GO" id="GO:0003735">
    <property type="term" value="F:structural constituent of ribosome"/>
    <property type="evidence" value="ECO:0007669"/>
    <property type="project" value="InterPro"/>
</dbReference>
<dbReference type="GO" id="GO:0006412">
    <property type="term" value="P:translation"/>
    <property type="evidence" value="ECO:0007669"/>
    <property type="project" value="UniProtKB-UniRule"/>
</dbReference>
<dbReference type="Gene3D" id="1.20.58.110">
    <property type="entry name" value="Ribosomal protein S20"/>
    <property type="match status" value="1"/>
</dbReference>
<dbReference type="HAMAP" id="MF_00500">
    <property type="entry name" value="Ribosomal_bS20"/>
    <property type="match status" value="1"/>
</dbReference>
<dbReference type="InterPro" id="IPR002583">
    <property type="entry name" value="Ribosomal_bS20"/>
</dbReference>
<dbReference type="InterPro" id="IPR036510">
    <property type="entry name" value="Ribosomal_bS20_sf"/>
</dbReference>
<dbReference type="NCBIfam" id="TIGR00029">
    <property type="entry name" value="S20"/>
    <property type="match status" value="1"/>
</dbReference>
<dbReference type="PANTHER" id="PTHR33398">
    <property type="entry name" value="30S RIBOSOMAL PROTEIN S20"/>
    <property type="match status" value="1"/>
</dbReference>
<dbReference type="PANTHER" id="PTHR33398:SF1">
    <property type="entry name" value="SMALL RIBOSOMAL SUBUNIT PROTEIN BS20C"/>
    <property type="match status" value="1"/>
</dbReference>
<dbReference type="Pfam" id="PF01649">
    <property type="entry name" value="Ribosomal_S20p"/>
    <property type="match status" value="1"/>
</dbReference>
<dbReference type="SUPFAM" id="SSF46992">
    <property type="entry name" value="Ribosomal protein S20"/>
    <property type="match status" value="1"/>
</dbReference>
<sequence length="96" mass="10847">MAKQEVAAKKVKRPTALKRDLQNKKKRLNNKIYKSRVRTAVRSFQESLVKGDETLSKAKLDEVYSILDKCAKKGVFKLNKVSRTKSRLAARAAAKA</sequence>
<accession>Q6MEZ3</accession>
<gene>
    <name evidence="1" type="primary">rpsT</name>
    <name type="ordered locus">pc0132</name>
</gene>
<feature type="chain" id="PRO_0000168004" description="Small ribosomal subunit protein bS20">
    <location>
        <begin position="1"/>
        <end position="96"/>
    </location>
</feature>
<feature type="region of interest" description="Disordered" evidence="2">
    <location>
        <begin position="1"/>
        <end position="27"/>
    </location>
</feature>
<comment type="function">
    <text evidence="1">Binds directly to 16S ribosomal RNA.</text>
</comment>
<comment type="similarity">
    <text evidence="1">Belongs to the bacterial ribosomal protein bS20 family.</text>
</comment>
<name>RS20_PARUW</name>
<protein>
    <recommendedName>
        <fullName evidence="1">Small ribosomal subunit protein bS20</fullName>
    </recommendedName>
    <alternativeName>
        <fullName evidence="3">30S ribosomal protein S20</fullName>
    </alternativeName>
</protein>
<evidence type="ECO:0000255" key="1">
    <source>
        <dbReference type="HAMAP-Rule" id="MF_00500"/>
    </source>
</evidence>
<evidence type="ECO:0000256" key="2">
    <source>
        <dbReference type="SAM" id="MobiDB-lite"/>
    </source>
</evidence>
<evidence type="ECO:0000305" key="3"/>